<dbReference type="EC" id="3.4.25.1" evidence="1"/>
<dbReference type="EMBL" id="CP001688">
    <property type="protein sequence ID" value="ACV46169.1"/>
    <property type="molecule type" value="Genomic_DNA"/>
</dbReference>
<dbReference type="RefSeq" id="WP_012807562.1">
    <property type="nucleotide sequence ID" value="NC_013202.1"/>
</dbReference>
<dbReference type="SMR" id="C7NVQ4"/>
<dbReference type="STRING" id="485914.Hmuk_0018"/>
<dbReference type="GeneID" id="42177954"/>
<dbReference type="GeneID" id="8409514"/>
<dbReference type="KEGG" id="hmu:Hmuk_0018"/>
<dbReference type="eggNOG" id="arCOG00970">
    <property type="taxonomic scope" value="Archaea"/>
</dbReference>
<dbReference type="HOGENOM" id="CLU_035750_7_2_2"/>
<dbReference type="OrthoDB" id="6330at2157"/>
<dbReference type="Proteomes" id="UP000001746">
    <property type="component" value="Chromosome"/>
</dbReference>
<dbReference type="GO" id="GO:0005737">
    <property type="term" value="C:cytoplasm"/>
    <property type="evidence" value="ECO:0007669"/>
    <property type="project" value="UniProtKB-SubCell"/>
</dbReference>
<dbReference type="GO" id="GO:0019774">
    <property type="term" value="C:proteasome core complex, beta-subunit complex"/>
    <property type="evidence" value="ECO:0007669"/>
    <property type="project" value="UniProtKB-UniRule"/>
</dbReference>
<dbReference type="GO" id="GO:0004298">
    <property type="term" value="F:threonine-type endopeptidase activity"/>
    <property type="evidence" value="ECO:0007669"/>
    <property type="project" value="UniProtKB-UniRule"/>
</dbReference>
<dbReference type="GO" id="GO:0010498">
    <property type="term" value="P:proteasomal protein catabolic process"/>
    <property type="evidence" value="ECO:0007669"/>
    <property type="project" value="UniProtKB-UniRule"/>
</dbReference>
<dbReference type="Gene3D" id="3.60.20.10">
    <property type="entry name" value="Glutamine Phosphoribosylpyrophosphate, subunit 1, domain 1"/>
    <property type="match status" value="1"/>
</dbReference>
<dbReference type="HAMAP" id="MF_02113_A">
    <property type="entry name" value="Proteasome_B_A"/>
    <property type="match status" value="1"/>
</dbReference>
<dbReference type="InterPro" id="IPR029055">
    <property type="entry name" value="Ntn_hydrolases_N"/>
</dbReference>
<dbReference type="InterPro" id="IPR019983">
    <property type="entry name" value="Pept_T1A_Psome_bsu_arc"/>
</dbReference>
<dbReference type="InterPro" id="IPR000243">
    <property type="entry name" value="Pept_T1A_subB"/>
</dbReference>
<dbReference type="InterPro" id="IPR001353">
    <property type="entry name" value="Proteasome_sua/b"/>
</dbReference>
<dbReference type="InterPro" id="IPR023333">
    <property type="entry name" value="Proteasome_suB-type"/>
</dbReference>
<dbReference type="NCBIfam" id="TIGR03634">
    <property type="entry name" value="arc_protsome_B"/>
    <property type="match status" value="1"/>
</dbReference>
<dbReference type="PANTHER" id="PTHR32194:SF0">
    <property type="entry name" value="ATP-DEPENDENT PROTEASE SUBUNIT HSLV"/>
    <property type="match status" value="1"/>
</dbReference>
<dbReference type="PANTHER" id="PTHR32194">
    <property type="entry name" value="METALLOPROTEASE TLDD"/>
    <property type="match status" value="1"/>
</dbReference>
<dbReference type="Pfam" id="PF00227">
    <property type="entry name" value="Proteasome"/>
    <property type="match status" value="1"/>
</dbReference>
<dbReference type="PRINTS" id="PR00141">
    <property type="entry name" value="PROTEASOME"/>
</dbReference>
<dbReference type="SUPFAM" id="SSF56235">
    <property type="entry name" value="N-terminal nucleophile aminohydrolases (Ntn hydrolases)"/>
    <property type="match status" value="1"/>
</dbReference>
<dbReference type="PROSITE" id="PS51476">
    <property type="entry name" value="PROTEASOME_BETA_2"/>
    <property type="match status" value="1"/>
</dbReference>
<gene>
    <name evidence="1" type="primary">psmB</name>
    <name type="ordered locus">Hmuk_0018</name>
</gene>
<organism>
    <name type="scientific">Halomicrobium mukohataei (strain ATCC 700874 / DSM 12286 / JCM 9738 / NCIMB 13541)</name>
    <name type="common">Haloarcula mukohataei</name>
    <dbReference type="NCBI Taxonomy" id="485914"/>
    <lineage>
        <taxon>Archaea</taxon>
        <taxon>Methanobacteriati</taxon>
        <taxon>Methanobacteriota</taxon>
        <taxon>Stenosarchaea group</taxon>
        <taxon>Halobacteria</taxon>
        <taxon>Halobacteriales</taxon>
        <taxon>Haloarculaceae</taxon>
        <taxon>Halomicrobium</taxon>
    </lineage>
</organism>
<reference key="1">
    <citation type="journal article" date="2009" name="Stand. Genomic Sci.">
        <title>Complete genome sequence of Halomicrobium mukohataei type strain (arg-2).</title>
        <authorList>
            <person name="Tindall B.J."/>
            <person name="Schneider S."/>
            <person name="Lapidus A."/>
            <person name="Copeland A."/>
            <person name="Glavina Del Rio T."/>
            <person name="Nolan M."/>
            <person name="Lucas S."/>
            <person name="Chen F."/>
            <person name="Tice H."/>
            <person name="Cheng J.F."/>
            <person name="Saunders E."/>
            <person name="Bruce D."/>
            <person name="Goodwin L."/>
            <person name="Pitluck S."/>
            <person name="Mikhailova N."/>
            <person name="Pati A."/>
            <person name="Ivanova N."/>
            <person name="Mavrommatis K."/>
            <person name="Chen A."/>
            <person name="Palaniappan K."/>
            <person name="Chain P."/>
            <person name="Land M."/>
            <person name="Hauser L."/>
            <person name="Chang Y.J."/>
            <person name="Jeffries C.D."/>
            <person name="Brettin T."/>
            <person name="Han C."/>
            <person name="Rohde M."/>
            <person name="Goker M."/>
            <person name="Bristow J."/>
            <person name="Eisen J.A."/>
            <person name="Markowitz V."/>
            <person name="Hugenholtz P."/>
            <person name="Klenk H.P."/>
            <person name="Kyrpides N.C."/>
            <person name="Detter J.C."/>
        </authorList>
    </citation>
    <scope>NUCLEOTIDE SEQUENCE [LARGE SCALE GENOMIC DNA]</scope>
    <source>
        <strain>ATCC 700874 / DSM 12286 / JCM 9738 / NCIMB 13541</strain>
    </source>
</reference>
<keyword id="KW-0068">Autocatalytic cleavage</keyword>
<keyword id="KW-0963">Cytoplasm</keyword>
<keyword id="KW-0378">Hydrolase</keyword>
<keyword id="KW-0645">Protease</keyword>
<keyword id="KW-0647">Proteasome</keyword>
<keyword id="KW-1185">Reference proteome</keyword>
<keyword id="KW-0888">Threonine protease</keyword>
<keyword id="KW-0865">Zymogen</keyword>
<sequence>MSKFPDLPGMKNLDANPYEPELASFDDMDADAGDGDAVAKTGTTTIGITTDGGVVIATDMRASLGGRFVSNKSVQKVEQIHPSAALTLVGSVGGAQSFIRTLRSESDLYEVRRGEPMSISALATLAGNFARGGPFFAINPILGGVDEEGSHVYSIDPAGGVMEDDYTVTGSGMQVAHGKLEDRYHDDLSMEEAEELAVEAVYAATERDTGSGNGVYVATVTGDGVDITGYDDFEGAR</sequence>
<proteinExistence type="inferred from homology"/>
<name>PSB_HALMD</name>
<accession>C7NVQ4</accession>
<feature type="propeptide" id="PRO_0000397302" description="Removed in mature form; by autocatalysis" evidence="1">
    <location>
        <begin position="1"/>
        <end position="42"/>
    </location>
</feature>
<feature type="chain" id="PRO_0000397303" description="Proteasome subunit beta">
    <location>
        <begin position="43"/>
        <end position="237"/>
    </location>
</feature>
<feature type="region of interest" description="Disordered" evidence="2">
    <location>
        <begin position="1"/>
        <end position="27"/>
    </location>
</feature>
<feature type="active site" description="Nucleophile" evidence="1">
    <location>
        <position position="43"/>
    </location>
</feature>
<evidence type="ECO:0000255" key="1">
    <source>
        <dbReference type="HAMAP-Rule" id="MF_02113"/>
    </source>
</evidence>
<evidence type="ECO:0000256" key="2">
    <source>
        <dbReference type="SAM" id="MobiDB-lite"/>
    </source>
</evidence>
<comment type="function">
    <text evidence="1">Component of the proteasome core, a large protease complex with broad specificity involved in protein degradation.</text>
</comment>
<comment type="catalytic activity">
    <reaction evidence="1">
        <text>Cleavage of peptide bonds with very broad specificity.</text>
        <dbReference type="EC" id="3.4.25.1"/>
    </reaction>
</comment>
<comment type="activity regulation">
    <text evidence="1">The formation of the proteasomal ATPase PAN-20S proteasome complex, via the docking of the C-termini of PAN into the intersubunit pockets in the alpha-rings, triggers opening of the gate for substrate entry. Interconversion between the open-gate and close-gate conformations leads to a dynamic regulation of the 20S proteasome proteolysis activity.</text>
</comment>
<comment type="subunit">
    <text evidence="1">The 20S proteasome core is composed of 14 alpha and 14 beta subunits that assemble into four stacked heptameric rings, resulting in a barrel-shaped structure. The two inner rings, each composed of seven catalytic beta subunits, are sandwiched by two outer rings, each composed of seven alpha subunits. The catalytic chamber with the active sites is on the inside of the barrel. Has a gated structure, the ends of the cylinder being occluded by the N-termini of the alpha-subunits. Is capped at one or both ends by the proteasome regulatory ATPase, PAN.</text>
</comment>
<comment type="subcellular location">
    <subcellularLocation>
        <location evidence="1">Cytoplasm</location>
    </subcellularLocation>
</comment>
<comment type="similarity">
    <text evidence="1">Belongs to the peptidase T1B family.</text>
</comment>
<protein>
    <recommendedName>
        <fullName evidence="1">Proteasome subunit beta</fullName>
        <ecNumber evidence="1">3.4.25.1</ecNumber>
    </recommendedName>
    <alternativeName>
        <fullName evidence="1">20S proteasome beta subunit</fullName>
    </alternativeName>
    <alternativeName>
        <fullName evidence="1">Proteasome core protein PsmB</fullName>
    </alternativeName>
</protein>